<reference key="1">
    <citation type="submission" date="2008-01" db="EMBL/GenBank/DDBJ databases">
        <title>Complete sequence of Thermoanaerobacter sp. X514.</title>
        <authorList>
            <consortium name="US DOE Joint Genome Institute"/>
            <person name="Copeland A."/>
            <person name="Lucas S."/>
            <person name="Lapidus A."/>
            <person name="Barry K."/>
            <person name="Glavina del Rio T."/>
            <person name="Dalin E."/>
            <person name="Tice H."/>
            <person name="Pitluck S."/>
            <person name="Bruce D."/>
            <person name="Goodwin L."/>
            <person name="Saunders E."/>
            <person name="Brettin T."/>
            <person name="Detter J.C."/>
            <person name="Han C."/>
            <person name="Schmutz J."/>
            <person name="Larimer F."/>
            <person name="Land M."/>
            <person name="Hauser L."/>
            <person name="Kyrpides N."/>
            <person name="Kim E."/>
            <person name="Hemme C."/>
            <person name="Fields M.W."/>
            <person name="He Z."/>
            <person name="Zhou J."/>
            <person name="Richardson P."/>
        </authorList>
    </citation>
    <scope>NUCLEOTIDE SEQUENCE [LARGE SCALE GENOMIC DNA]</scope>
    <source>
        <strain>X514</strain>
    </source>
</reference>
<keyword id="KW-0963">Cytoplasm</keyword>
<keyword id="KW-0648">Protein biosynthesis</keyword>
<organism>
    <name type="scientific">Thermoanaerobacter sp. (strain X514)</name>
    <dbReference type="NCBI Taxonomy" id="399726"/>
    <lineage>
        <taxon>Bacteria</taxon>
        <taxon>Bacillati</taxon>
        <taxon>Bacillota</taxon>
        <taxon>Clostridia</taxon>
        <taxon>Thermoanaerobacterales</taxon>
        <taxon>Thermoanaerobacteraceae</taxon>
        <taxon>Thermoanaerobacter</taxon>
    </lineage>
</organism>
<comment type="function">
    <text evidence="1">Responsible for the release of ribosomes from messenger RNA at the termination of protein biosynthesis. May increase the efficiency of translation by recycling ribosomes from one round of translation to another.</text>
</comment>
<comment type="subcellular location">
    <subcellularLocation>
        <location evidence="1">Cytoplasm</location>
    </subcellularLocation>
</comment>
<comment type="similarity">
    <text evidence="1">Belongs to the RRF family.</text>
</comment>
<sequence length="184" mass="21079">MSDYLKASEEKMQKSLSVLKNELAAIRAGRANPALLDRIMVDYYGTPTPLNRLATITAPEPRVLVVQPWDVSKISDIEKAIQKSDLGINPVSDGKVLRLVFPELTEERRKELVKLVHKKAEEAKVAVRQIRRDANDAVKKMEKNGEISEDERKKREEEIQKLTDKYIKEIDKVVEAKEKEIMEI</sequence>
<feature type="chain" id="PRO_1000090797" description="Ribosome-recycling factor">
    <location>
        <begin position="1"/>
        <end position="184"/>
    </location>
</feature>
<accession>B0K1P6</accession>
<evidence type="ECO:0000255" key="1">
    <source>
        <dbReference type="HAMAP-Rule" id="MF_00040"/>
    </source>
</evidence>
<gene>
    <name evidence="1" type="primary">frr</name>
    <name type="ordered locus">Teth514_1658</name>
</gene>
<protein>
    <recommendedName>
        <fullName evidence="1">Ribosome-recycling factor</fullName>
        <shortName evidence="1">RRF</shortName>
    </recommendedName>
    <alternativeName>
        <fullName evidence="1">Ribosome-releasing factor</fullName>
    </alternativeName>
</protein>
<dbReference type="EMBL" id="CP000923">
    <property type="protein sequence ID" value="ABY92944.1"/>
    <property type="molecule type" value="Genomic_DNA"/>
</dbReference>
<dbReference type="RefSeq" id="WP_003866736.1">
    <property type="nucleotide sequence ID" value="NC_010320.1"/>
</dbReference>
<dbReference type="SMR" id="B0K1P6"/>
<dbReference type="KEGG" id="tex:Teth514_1658"/>
<dbReference type="HOGENOM" id="CLU_073981_2_0_9"/>
<dbReference type="Proteomes" id="UP000002155">
    <property type="component" value="Chromosome"/>
</dbReference>
<dbReference type="GO" id="GO:0005737">
    <property type="term" value="C:cytoplasm"/>
    <property type="evidence" value="ECO:0007669"/>
    <property type="project" value="UniProtKB-SubCell"/>
</dbReference>
<dbReference type="GO" id="GO:0043023">
    <property type="term" value="F:ribosomal large subunit binding"/>
    <property type="evidence" value="ECO:0007669"/>
    <property type="project" value="TreeGrafter"/>
</dbReference>
<dbReference type="GO" id="GO:0006415">
    <property type="term" value="P:translational termination"/>
    <property type="evidence" value="ECO:0007669"/>
    <property type="project" value="UniProtKB-UniRule"/>
</dbReference>
<dbReference type="CDD" id="cd00520">
    <property type="entry name" value="RRF"/>
    <property type="match status" value="1"/>
</dbReference>
<dbReference type="FunFam" id="1.10.132.20:FF:000001">
    <property type="entry name" value="Ribosome-recycling factor"/>
    <property type="match status" value="1"/>
</dbReference>
<dbReference type="FunFam" id="3.30.1360.40:FF:000001">
    <property type="entry name" value="Ribosome-recycling factor"/>
    <property type="match status" value="1"/>
</dbReference>
<dbReference type="Gene3D" id="3.30.1360.40">
    <property type="match status" value="1"/>
</dbReference>
<dbReference type="Gene3D" id="1.10.132.20">
    <property type="entry name" value="Ribosome-recycling factor"/>
    <property type="match status" value="1"/>
</dbReference>
<dbReference type="HAMAP" id="MF_00040">
    <property type="entry name" value="RRF"/>
    <property type="match status" value="1"/>
</dbReference>
<dbReference type="InterPro" id="IPR002661">
    <property type="entry name" value="Ribosome_recyc_fac"/>
</dbReference>
<dbReference type="InterPro" id="IPR023584">
    <property type="entry name" value="Ribosome_recyc_fac_dom"/>
</dbReference>
<dbReference type="InterPro" id="IPR036191">
    <property type="entry name" value="RRF_sf"/>
</dbReference>
<dbReference type="NCBIfam" id="TIGR00496">
    <property type="entry name" value="frr"/>
    <property type="match status" value="1"/>
</dbReference>
<dbReference type="PANTHER" id="PTHR20982:SF3">
    <property type="entry name" value="MITOCHONDRIAL RIBOSOME RECYCLING FACTOR PSEUDO 1"/>
    <property type="match status" value="1"/>
</dbReference>
<dbReference type="PANTHER" id="PTHR20982">
    <property type="entry name" value="RIBOSOME RECYCLING FACTOR"/>
    <property type="match status" value="1"/>
</dbReference>
<dbReference type="Pfam" id="PF01765">
    <property type="entry name" value="RRF"/>
    <property type="match status" value="1"/>
</dbReference>
<dbReference type="SUPFAM" id="SSF55194">
    <property type="entry name" value="Ribosome recycling factor, RRF"/>
    <property type="match status" value="1"/>
</dbReference>
<proteinExistence type="inferred from homology"/>
<name>RRF_THEPX</name>